<keyword id="KW-0007">Acetylation</keyword>
<keyword id="KW-0067">ATP-binding</keyword>
<keyword id="KW-0131">Cell cycle</keyword>
<keyword id="KW-0132">Cell division</keyword>
<keyword id="KW-0137">Centromere</keyword>
<keyword id="KW-0158">Chromosome</keyword>
<keyword id="KW-0963">Cytoplasm</keyword>
<keyword id="KW-0206">Cytoskeleton</keyword>
<keyword id="KW-0418">Kinase</keyword>
<keyword id="KW-0995">Kinetochore</keyword>
<keyword id="KW-0498">Mitosis</keyword>
<keyword id="KW-0547">Nucleotide-binding</keyword>
<keyword id="KW-0539">Nucleus</keyword>
<keyword id="KW-0597">Phosphoprotein</keyword>
<keyword id="KW-1185">Reference proteome</keyword>
<keyword id="KW-0723">Serine/threonine-protein kinase</keyword>
<keyword id="KW-0808">Transferase</keyword>
<keyword id="KW-0832">Ubl conjugation</keyword>
<feature type="chain" id="PRO_0000248282" description="Aurora kinase B">
    <location>
        <begin position="1"/>
        <end position="344"/>
    </location>
</feature>
<feature type="domain" description="Protein kinase" evidence="3">
    <location>
        <begin position="77"/>
        <end position="327"/>
    </location>
</feature>
<feature type="region of interest" description="Disordered" evidence="5">
    <location>
        <begin position="46"/>
        <end position="65"/>
    </location>
</feature>
<feature type="active site" description="Proton acceptor" evidence="3 4">
    <location>
        <position position="200"/>
    </location>
</feature>
<feature type="binding site" evidence="3">
    <location>
        <begin position="83"/>
        <end position="91"/>
    </location>
    <ligand>
        <name>ATP</name>
        <dbReference type="ChEBI" id="CHEBI:30616"/>
    </ligand>
</feature>
<feature type="binding site" evidence="3">
    <location>
        <position position="106"/>
    </location>
    <ligand>
        <name>ATP</name>
        <dbReference type="ChEBI" id="CHEBI:30616"/>
    </ligand>
</feature>
<feature type="modified residue" description="Phosphothreonine" evidence="2">
    <location>
        <position position="35"/>
    </location>
</feature>
<feature type="modified residue" description="Phosphoserine" evidence="2">
    <location>
        <position position="62"/>
    </location>
</feature>
<feature type="modified residue" description="Phosphothreonine" evidence="2">
    <location>
        <position position="64"/>
    </location>
</feature>
<feature type="modified residue" description="N6-acetyllysine" evidence="2">
    <location>
        <position position="215"/>
    </location>
</feature>
<feature type="modified residue" description="Phosphoserine" evidence="2">
    <location>
        <position position="227"/>
    </location>
</feature>
<feature type="modified residue" description="Phosphothreonine; by autocatalysis" evidence="2">
    <location>
        <position position="232"/>
    </location>
</feature>
<name>AURKB_BOVIN</name>
<comment type="function">
    <text evidence="1 2">Serine/threonine-protein kinase component of the chromosomal passenger complex (CPC), a complex that acts as a key regulator of mitosis. The CPC complex has essential functions at the centromere in ensuring correct chromosome alignment and segregation and is required for chromatin-induced microtubule stabilization and spindle assembly. Involved in the bipolar attachment of spindle microtubules to kinetochores and is a key regulator for the onset of cytokinesis during mitosis. Required for central/midzone spindle assembly and cleavage furrow formation. Key component of the cytokinesis checkpoint, a process required to delay abscission to prevent both premature resolution of intercellular chromosome bridges and accumulation of DNA damage: phosphorylates CHMP4C, leading to retain abscission-competent VPS4 (VPS4A and/or VPS4B) at the midbody ring until abscission checkpoint signaling is terminated at late cytokinesis. AURKB phosphorylates the CPC complex subunits BIRC5/survivin, CDCA8/borealin and INCENP. Phosphorylation of INCENP leads to increased AURKB activity. Other known AURKB substrates involved in centromeric functions and mitosis are CENPA, DES/desmin, GPAF, KIF2C, NSUN2, RACGAP1, SEPTIN1, VIM/vimentin, HASPIN, and histone H3. A positive feedback loop involving HASPIN and AURKB contributes to localization of CPC to centromeres. Phosphorylation of VIM controls vimentin filament segregation in cytokinetic process, whereas histone H3 is phosphorylated at 'Ser-10' and 'Ser-28' during mitosis (H3S10ph and H3S28ph, respectively). AURKB is also required for kinetochore localization of BUB1 and SGO1. Phosphorylation of p53/TP53 negatively regulates its transcriptional activity (By similarity). Key regulator of active promoters in resting B- and T-lymphocytes: acts by mediating phosphorylation of H3S28ph at active promoters in resting B-cells, inhibiting RNF2/RING1B-mediated ubiquitination of histone H2A and enhancing binding and activity of the USP16 deubiquitinase at transcribed genes (By similarity). Acts as an inhibitor of CGAS during mitosis: catalyzes phosphorylation of the N-terminus of CGAS during the G2-M transition, blocking CGAS liquid phase separation and activation, and thereby preventing CGAS-induced autoimmunity (By similarity). Phosphorylates KRT5 during anaphase and telophase (By similarity). Phosphorylates ATXN10 which promotes phosphorylation of ATXN10 by PLK1 and may play a role in the regulation of cytokinesis and stimulating the proteasomal degradation of ATXN10 (By similarity).</text>
</comment>
<comment type="catalytic activity">
    <reaction evidence="2">
        <text>L-seryl-[protein] + ATP = O-phospho-L-seryl-[protein] + ADP + H(+)</text>
        <dbReference type="Rhea" id="RHEA:17989"/>
        <dbReference type="Rhea" id="RHEA-COMP:9863"/>
        <dbReference type="Rhea" id="RHEA-COMP:11604"/>
        <dbReference type="ChEBI" id="CHEBI:15378"/>
        <dbReference type="ChEBI" id="CHEBI:29999"/>
        <dbReference type="ChEBI" id="CHEBI:30616"/>
        <dbReference type="ChEBI" id="CHEBI:83421"/>
        <dbReference type="ChEBI" id="CHEBI:456216"/>
        <dbReference type="EC" id="2.7.11.1"/>
    </reaction>
</comment>
<comment type="catalytic activity">
    <reaction evidence="2">
        <text>L-threonyl-[protein] + ATP = O-phospho-L-threonyl-[protein] + ADP + H(+)</text>
        <dbReference type="Rhea" id="RHEA:46608"/>
        <dbReference type="Rhea" id="RHEA-COMP:11060"/>
        <dbReference type="Rhea" id="RHEA-COMP:11605"/>
        <dbReference type="ChEBI" id="CHEBI:15378"/>
        <dbReference type="ChEBI" id="CHEBI:30013"/>
        <dbReference type="ChEBI" id="CHEBI:30616"/>
        <dbReference type="ChEBI" id="CHEBI:61977"/>
        <dbReference type="ChEBI" id="CHEBI:456216"/>
        <dbReference type="EC" id="2.7.11.1"/>
    </reaction>
</comment>
<comment type="activity regulation">
    <text evidence="2">Activity is greatly increased when AURKB is within the CPC complex. In particular, AURKB-phosphorylated INCENP acts as an activator of AURKB. Positive feedback between HASPIN and AURKB contributes to CPC localization.</text>
</comment>
<comment type="subunit">
    <text evidence="1 2">Component of the chromosomal passenger complex (CPC) composed of at least BIRC5/survivin, CDCA8/borealin, INCENP, AURKB or AURKC; predominantly independent AURKB- and AURKC-containing complexes exist. Associates with RACGAP1 during M phase. Interacts with SPDYC; this interaction may be required for proper localization of active, Thr-232-phosphorylated AURKB form during prometaphase and metaphase. Interacts with p53/TP53. Interacts (via the middle kinase domain) with NOC2L (via the N- and C-terminus domains). Interacts with CDCA1. Interacts with EVI5. Interacts with JTB. Interacts with NDC80. Interacts with PSMA3 (By similarity). Interacts with RNF2/RING1B (By similarity). Interacts with SEPTIN1. Interacts with SIRT2. Interacts with TACC1. Interacts with TTC28 (By similarity).</text>
</comment>
<comment type="subcellular location">
    <subcellularLocation>
        <location evidence="2">Nucleus</location>
    </subcellularLocation>
    <subcellularLocation>
        <location evidence="2">Chromosome</location>
    </subcellularLocation>
    <subcellularLocation>
        <location evidence="2">Chromosome</location>
        <location evidence="2">Centromere</location>
    </subcellularLocation>
    <subcellularLocation>
        <location evidence="2">Chromosome</location>
        <location evidence="2">Centromere</location>
        <location evidence="2">Kinetochore</location>
    </subcellularLocation>
    <subcellularLocation>
        <location evidence="2">Cytoplasm</location>
        <location evidence="2">Cytoskeleton</location>
        <location evidence="2">Spindle</location>
    </subcellularLocation>
    <subcellularLocation>
        <location evidence="2">Midbody</location>
    </subcellularLocation>
    <text evidence="2">Localizes on chromosome arms and inner centromeres from prophase through metaphase and then transferring to the spindle midzone and midbody from anaphase through cytokinesis. Colocalized with gamma tubulin in the midbody. Proper localization of the active, Thr-232-phosphorylated form during metaphase may be dependent upon interaction with SPDYC. Colocalized with SIRT2 during cytokinesis with the midbody. Localization (and probably targeting of the CPC) to the inner centromere occurs predominantly in regions with overlapping mitosis-specific histone phosphorylations H3pT3 and H2ApT12.</text>
</comment>
<comment type="PTM">
    <text evidence="2">The phosphorylation of Thr-232 requires the binding to INCENP and occurs by means of an autophosphorylation mechanism. Thr-232 phosphorylation is indispensable for the AURKB kinase activity.</text>
</comment>
<comment type="PTM">
    <text evidence="2">Acetylated at Lys-215 by KAT5 at kinetochores, increasing AURKB activity and promoting accurate chromosome segregation in mitosis.</text>
</comment>
<comment type="PTM">
    <text evidence="2">Ubiquitinated by different BCR (BTB-CUL3-RBX1) E3 ubiquitin ligase complexes. Ubiquitinated by the BCR(KLHL9-KLHL13) E3 ubiquitin ligase complex, ubiquitination leads to removal from mitotic chromosomes and is required for cytokinesis. During anaphase, the BCR(KLHL21) E3 ubiquitin ligase complex recruits the CPC complex from chromosomes to the spindle midzone and mediates the ubiquitination of AURKB. Ubiquitination of AURKB by BCR(KLHL21) E3 ubiquitin ligase complex may not lead to its degradation by the proteasome. Deubiquitinated by USP35; inhibiting CDH1-mediated degradation of AURKB.</text>
</comment>
<comment type="similarity">
    <text evidence="3">Belongs to the protein kinase superfamily. Ser/Thr protein kinase family. Aurora subfamily.</text>
</comment>
<accession>Q7YRC6</accession>
<reference key="1">
    <citation type="submission" date="2003-07" db="EMBL/GenBank/DDBJ databases">
        <title>Cloning of Bos taurus serine/threonine kinase 12 (STK12).</title>
        <authorList>
            <person name="Zhou G."/>
            <person name="Li W."/>
            <person name="Yu L."/>
        </authorList>
    </citation>
    <scope>NUCLEOTIDE SEQUENCE [MRNA]</scope>
</reference>
<protein>
    <recommendedName>
        <fullName>Aurora kinase B</fullName>
        <ecNumber evidence="2">2.7.11.1</ecNumber>
    </recommendedName>
    <alternativeName>
        <fullName>Aurora 1</fullName>
    </alternativeName>
    <alternativeName>
        <fullName>Aurora- and IPL1-like midbody-associated protein 1</fullName>
        <shortName>AIM-1</shortName>
    </alternativeName>
    <alternativeName>
        <fullName>Aurora/IPL1-related kinase 2</fullName>
        <shortName>ARK-2</shortName>
        <shortName>Aurora-related kinase 2</shortName>
    </alternativeName>
    <alternativeName>
        <fullName>STK-1</fullName>
    </alternativeName>
    <alternativeName>
        <fullName>Serine/threonine-protein kinase 12</fullName>
    </alternativeName>
    <alternativeName>
        <fullName>Serine/threonine-protein kinase 5</fullName>
    </alternativeName>
    <alternativeName>
        <fullName>Serine/threonine-protein kinase aurora-B</fullName>
    </alternativeName>
</protein>
<gene>
    <name type="primary">AURKB</name>
    <name type="synonym">AIK2</name>
    <name type="synonym">AIM1</name>
    <name type="synonym">AIRK2</name>
    <name type="synonym">ARK2</name>
    <name type="synonym">STK1</name>
    <name type="synonym">STK12</name>
    <name type="synonym">STK5</name>
</gene>
<evidence type="ECO:0000250" key="1">
    <source>
        <dbReference type="UniProtKB" id="O70126"/>
    </source>
</evidence>
<evidence type="ECO:0000250" key="2">
    <source>
        <dbReference type="UniProtKB" id="Q96GD4"/>
    </source>
</evidence>
<evidence type="ECO:0000255" key="3">
    <source>
        <dbReference type="PROSITE-ProRule" id="PRU00159"/>
    </source>
</evidence>
<evidence type="ECO:0000255" key="4">
    <source>
        <dbReference type="PROSITE-ProRule" id="PRU10027"/>
    </source>
</evidence>
<evidence type="ECO:0000256" key="5">
    <source>
        <dbReference type="SAM" id="MobiDB-lite"/>
    </source>
</evidence>
<sequence>MAQKENAYPWPYGRQTAQPGLNTLPQRVLRKEPVTPSALVLMSRSNAQPTAAPGQKVVENSSGTPNIPKRSFTIDDFEIGRPLGKGKFGNVYLAREKKSHFIVALKVLFKSQIEKEGVEHQLRREIEIQAHLQHPNILRLYNYFYDRRRIYLILEYAPRGELYKELQKSRTFDEQRTATIMEELADALTYCHAKKVIHRDIKPENLLLGLRGELKIADFGWSVHAPSLRRKTMCGTLDYLPPEMIEGRTHNEKVDLWCIGVLCYELLVGNPPFESASHNETYRRIVKVDLKFPPSVPLGAQDFIYKLLKHNPSERLPLAQVSAHPWVRTHSRRVLPPSAPQSVP</sequence>
<organism>
    <name type="scientific">Bos taurus</name>
    <name type="common">Bovine</name>
    <dbReference type="NCBI Taxonomy" id="9913"/>
    <lineage>
        <taxon>Eukaryota</taxon>
        <taxon>Metazoa</taxon>
        <taxon>Chordata</taxon>
        <taxon>Craniata</taxon>
        <taxon>Vertebrata</taxon>
        <taxon>Euteleostomi</taxon>
        <taxon>Mammalia</taxon>
        <taxon>Eutheria</taxon>
        <taxon>Laurasiatheria</taxon>
        <taxon>Artiodactyla</taxon>
        <taxon>Ruminantia</taxon>
        <taxon>Pecora</taxon>
        <taxon>Bovidae</taxon>
        <taxon>Bovinae</taxon>
        <taxon>Bos</taxon>
    </lineage>
</organism>
<dbReference type="EC" id="2.7.11.1" evidence="2"/>
<dbReference type="EMBL" id="AY336975">
    <property type="protein sequence ID" value="AAQ16151.1"/>
    <property type="molecule type" value="mRNA"/>
</dbReference>
<dbReference type="SMR" id="Q7YRC6"/>
<dbReference type="FunCoup" id="Q7YRC6">
    <property type="interactions" value="911"/>
</dbReference>
<dbReference type="STRING" id="9913.ENSBTAP00000002250"/>
<dbReference type="PaxDb" id="9913-ENSBTAP00000002250"/>
<dbReference type="eggNOG" id="KOG0580">
    <property type="taxonomic scope" value="Eukaryota"/>
</dbReference>
<dbReference type="InParanoid" id="Q7YRC6"/>
<dbReference type="OrthoDB" id="377346at2759"/>
<dbReference type="Proteomes" id="UP000009136">
    <property type="component" value="Unplaced"/>
</dbReference>
<dbReference type="GO" id="GO:0005813">
    <property type="term" value="C:centrosome"/>
    <property type="evidence" value="ECO:0000318"/>
    <property type="project" value="GO_Central"/>
</dbReference>
<dbReference type="GO" id="GO:0005694">
    <property type="term" value="C:chromosome"/>
    <property type="evidence" value="ECO:0000314"/>
    <property type="project" value="AgBase"/>
</dbReference>
<dbReference type="GO" id="GO:0032133">
    <property type="term" value="C:chromosome passenger complex"/>
    <property type="evidence" value="ECO:0000318"/>
    <property type="project" value="GO_Central"/>
</dbReference>
<dbReference type="GO" id="GO:0000775">
    <property type="term" value="C:chromosome, centromeric region"/>
    <property type="evidence" value="ECO:0000314"/>
    <property type="project" value="AgBase"/>
</dbReference>
<dbReference type="GO" id="GO:0070938">
    <property type="term" value="C:contractile ring"/>
    <property type="evidence" value="ECO:0000314"/>
    <property type="project" value="AgBase"/>
</dbReference>
<dbReference type="GO" id="GO:0005737">
    <property type="term" value="C:cytoplasm"/>
    <property type="evidence" value="ECO:0000314"/>
    <property type="project" value="AgBase"/>
</dbReference>
<dbReference type="GO" id="GO:0042585">
    <property type="term" value="C:germinal vesicle"/>
    <property type="evidence" value="ECO:0000314"/>
    <property type="project" value="AgBase"/>
</dbReference>
<dbReference type="GO" id="GO:0000776">
    <property type="term" value="C:kinetochore"/>
    <property type="evidence" value="ECO:0000250"/>
    <property type="project" value="UniProtKB"/>
</dbReference>
<dbReference type="GO" id="GO:1990385">
    <property type="term" value="C:meiotic spindle midzone"/>
    <property type="evidence" value="ECO:0000314"/>
    <property type="project" value="AgBase"/>
</dbReference>
<dbReference type="GO" id="GO:0030496">
    <property type="term" value="C:midbody"/>
    <property type="evidence" value="ECO:0000314"/>
    <property type="project" value="AgBase"/>
</dbReference>
<dbReference type="GO" id="GO:0005634">
    <property type="term" value="C:nucleus"/>
    <property type="evidence" value="ECO:0000250"/>
    <property type="project" value="UniProtKB"/>
</dbReference>
<dbReference type="GO" id="GO:0005876">
    <property type="term" value="C:spindle microtubule"/>
    <property type="evidence" value="ECO:0000318"/>
    <property type="project" value="GO_Central"/>
</dbReference>
<dbReference type="GO" id="GO:0051233">
    <property type="term" value="C:spindle midzone"/>
    <property type="evidence" value="ECO:0000318"/>
    <property type="project" value="GO_Central"/>
</dbReference>
<dbReference type="GO" id="GO:0000922">
    <property type="term" value="C:spindle pole"/>
    <property type="evidence" value="ECO:0000318"/>
    <property type="project" value="GO_Central"/>
</dbReference>
<dbReference type="GO" id="GO:0005524">
    <property type="term" value="F:ATP binding"/>
    <property type="evidence" value="ECO:0007669"/>
    <property type="project" value="UniProtKB-KW"/>
</dbReference>
<dbReference type="GO" id="GO:0106310">
    <property type="term" value="F:protein serine kinase activity"/>
    <property type="evidence" value="ECO:0007669"/>
    <property type="project" value="RHEA"/>
</dbReference>
<dbReference type="GO" id="GO:0004674">
    <property type="term" value="F:protein serine/threonine kinase activity"/>
    <property type="evidence" value="ECO:0000314"/>
    <property type="project" value="UniProtKB"/>
</dbReference>
<dbReference type="GO" id="GO:0034644">
    <property type="term" value="P:cellular response to UV"/>
    <property type="evidence" value="ECO:0000250"/>
    <property type="project" value="UniProtKB"/>
</dbReference>
<dbReference type="GO" id="GO:0036089">
    <property type="term" value="P:cleavage furrow formation"/>
    <property type="evidence" value="ECO:0000250"/>
    <property type="project" value="UniProtKB"/>
</dbReference>
<dbReference type="GO" id="GO:0061952">
    <property type="term" value="P:midbody abscission"/>
    <property type="evidence" value="ECO:0000315"/>
    <property type="project" value="UniProtKB"/>
</dbReference>
<dbReference type="GO" id="GO:0044878">
    <property type="term" value="P:mitotic cytokinesis checkpoint signaling"/>
    <property type="evidence" value="ECO:0000315"/>
    <property type="project" value="UniProtKB"/>
</dbReference>
<dbReference type="GO" id="GO:1990758">
    <property type="term" value="P:mitotic sister chromatid biorientation"/>
    <property type="evidence" value="ECO:0000250"/>
    <property type="project" value="UniProtKB"/>
</dbReference>
<dbReference type="GO" id="GO:0051256">
    <property type="term" value="P:mitotic spindle midzone assembly"/>
    <property type="evidence" value="ECO:0000250"/>
    <property type="project" value="UniProtKB"/>
</dbReference>
<dbReference type="GO" id="GO:0007052">
    <property type="term" value="P:mitotic spindle organization"/>
    <property type="evidence" value="ECO:0000318"/>
    <property type="project" value="GO_Central"/>
</dbReference>
<dbReference type="GO" id="GO:0002903">
    <property type="term" value="P:negative regulation of B cell apoptotic process"/>
    <property type="evidence" value="ECO:0000250"/>
    <property type="project" value="UniProtKB"/>
</dbReference>
<dbReference type="GO" id="GO:0032466">
    <property type="term" value="P:negative regulation of cytokinesis"/>
    <property type="evidence" value="ECO:0000315"/>
    <property type="project" value="UniProtKB"/>
</dbReference>
<dbReference type="GO" id="GO:0000122">
    <property type="term" value="P:negative regulation of transcription by RNA polymerase II"/>
    <property type="evidence" value="ECO:0000250"/>
    <property type="project" value="UniProtKB"/>
</dbReference>
<dbReference type="GO" id="GO:0032467">
    <property type="term" value="P:positive regulation of cytokinesis"/>
    <property type="evidence" value="ECO:0000250"/>
    <property type="project" value="UniProtKB"/>
</dbReference>
<dbReference type="GO" id="GO:0062033">
    <property type="term" value="P:positive regulation of mitotic sister chromatid segregation"/>
    <property type="evidence" value="ECO:0000250"/>
    <property type="project" value="UniProtKB"/>
</dbReference>
<dbReference type="GO" id="GO:0043687">
    <property type="term" value="P:post-translational protein modification"/>
    <property type="evidence" value="ECO:0000250"/>
    <property type="project" value="UniProtKB"/>
</dbReference>
<dbReference type="GO" id="GO:0034501">
    <property type="term" value="P:protein localization to kinetochore"/>
    <property type="evidence" value="ECO:0000250"/>
    <property type="project" value="UniProtKB"/>
</dbReference>
<dbReference type="GO" id="GO:0032465">
    <property type="term" value="P:regulation of cytokinesis"/>
    <property type="evidence" value="ECO:0000318"/>
    <property type="project" value="GO_Central"/>
</dbReference>
<dbReference type="GO" id="GO:0140273">
    <property type="term" value="P:repair of mitotic kinetochore microtubule attachment defect"/>
    <property type="evidence" value="ECO:0000250"/>
    <property type="project" value="UniProtKB"/>
</dbReference>
<dbReference type="CDD" id="cd14117">
    <property type="entry name" value="STKc_Aurora-B_like"/>
    <property type="match status" value="1"/>
</dbReference>
<dbReference type="FunFam" id="3.30.200.20:FF:000042">
    <property type="entry name" value="Aurora kinase A"/>
    <property type="match status" value="1"/>
</dbReference>
<dbReference type="FunFam" id="1.10.510.10:FF:000235">
    <property type="entry name" value="Serine/threonine-protein kinase ark1"/>
    <property type="match status" value="1"/>
</dbReference>
<dbReference type="Gene3D" id="3.30.200.20">
    <property type="entry name" value="Phosphorylase Kinase, domain 1"/>
    <property type="match status" value="1"/>
</dbReference>
<dbReference type="Gene3D" id="1.10.510.10">
    <property type="entry name" value="Transferase(Phosphotransferase) domain 1"/>
    <property type="match status" value="1"/>
</dbReference>
<dbReference type="InterPro" id="IPR030616">
    <property type="entry name" value="Aur-like"/>
</dbReference>
<dbReference type="InterPro" id="IPR011009">
    <property type="entry name" value="Kinase-like_dom_sf"/>
</dbReference>
<dbReference type="InterPro" id="IPR000719">
    <property type="entry name" value="Prot_kinase_dom"/>
</dbReference>
<dbReference type="InterPro" id="IPR017441">
    <property type="entry name" value="Protein_kinase_ATP_BS"/>
</dbReference>
<dbReference type="InterPro" id="IPR008271">
    <property type="entry name" value="Ser/Thr_kinase_AS"/>
</dbReference>
<dbReference type="PANTHER" id="PTHR24350">
    <property type="entry name" value="SERINE/THREONINE-PROTEIN KINASE IAL-RELATED"/>
    <property type="match status" value="1"/>
</dbReference>
<dbReference type="Pfam" id="PF00069">
    <property type="entry name" value="Pkinase"/>
    <property type="match status" value="1"/>
</dbReference>
<dbReference type="SMART" id="SM00220">
    <property type="entry name" value="S_TKc"/>
    <property type="match status" value="1"/>
</dbReference>
<dbReference type="SUPFAM" id="SSF56112">
    <property type="entry name" value="Protein kinase-like (PK-like)"/>
    <property type="match status" value="1"/>
</dbReference>
<dbReference type="PROSITE" id="PS00107">
    <property type="entry name" value="PROTEIN_KINASE_ATP"/>
    <property type="match status" value="1"/>
</dbReference>
<dbReference type="PROSITE" id="PS50011">
    <property type="entry name" value="PROTEIN_KINASE_DOM"/>
    <property type="match status" value="1"/>
</dbReference>
<dbReference type="PROSITE" id="PS00108">
    <property type="entry name" value="PROTEIN_KINASE_ST"/>
    <property type="match status" value="1"/>
</dbReference>
<proteinExistence type="evidence at transcript level"/>